<gene>
    <name evidence="1" type="primary">luxS</name>
    <name type="ordered locus">Sbal195_3565</name>
</gene>
<accession>A9L0U6</accession>
<dbReference type="EC" id="4.4.1.21" evidence="1"/>
<dbReference type="EMBL" id="CP000891">
    <property type="protein sequence ID" value="ABX50727.1"/>
    <property type="molecule type" value="Genomic_DNA"/>
</dbReference>
<dbReference type="RefSeq" id="WP_006080460.1">
    <property type="nucleotide sequence ID" value="NC_009997.1"/>
</dbReference>
<dbReference type="SMR" id="A9L0U6"/>
<dbReference type="GeneID" id="11773601"/>
<dbReference type="KEGG" id="sbn:Sbal195_3565"/>
<dbReference type="HOGENOM" id="CLU_107531_2_0_6"/>
<dbReference type="Proteomes" id="UP000000770">
    <property type="component" value="Chromosome"/>
</dbReference>
<dbReference type="GO" id="GO:0005506">
    <property type="term" value="F:iron ion binding"/>
    <property type="evidence" value="ECO:0007669"/>
    <property type="project" value="InterPro"/>
</dbReference>
<dbReference type="GO" id="GO:0043768">
    <property type="term" value="F:S-ribosylhomocysteine lyase activity"/>
    <property type="evidence" value="ECO:0007669"/>
    <property type="project" value="UniProtKB-UniRule"/>
</dbReference>
<dbReference type="GO" id="GO:0009372">
    <property type="term" value="P:quorum sensing"/>
    <property type="evidence" value="ECO:0007669"/>
    <property type="project" value="UniProtKB-UniRule"/>
</dbReference>
<dbReference type="FunFam" id="3.30.1360.80:FF:000001">
    <property type="entry name" value="S-ribosylhomocysteine lyase"/>
    <property type="match status" value="1"/>
</dbReference>
<dbReference type="Gene3D" id="3.30.1360.80">
    <property type="entry name" value="S-ribosylhomocysteinase (LuxS)"/>
    <property type="match status" value="1"/>
</dbReference>
<dbReference type="HAMAP" id="MF_00091">
    <property type="entry name" value="LuxS"/>
    <property type="match status" value="1"/>
</dbReference>
<dbReference type="InterPro" id="IPR037005">
    <property type="entry name" value="LuxS_sf"/>
</dbReference>
<dbReference type="InterPro" id="IPR011249">
    <property type="entry name" value="Metalloenz_LuxS/M16"/>
</dbReference>
<dbReference type="InterPro" id="IPR003815">
    <property type="entry name" value="S-ribosylhomocysteinase"/>
</dbReference>
<dbReference type="NCBIfam" id="NF002602">
    <property type="entry name" value="PRK02260.1-2"/>
    <property type="match status" value="1"/>
</dbReference>
<dbReference type="PANTHER" id="PTHR35799">
    <property type="entry name" value="S-RIBOSYLHOMOCYSTEINE LYASE"/>
    <property type="match status" value="1"/>
</dbReference>
<dbReference type="PANTHER" id="PTHR35799:SF1">
    <property type="entry name" value="S-RIBOSYLHOMOCYSTEINE LYASE"/>
    <property type="match status" value="1"/>
</dbReference>
<dbReference type="Pfam" id="PF02664">
    <property type="entry name" value="LuxS"/>
    <property type="match status" value="1"/>
</dbReference>
<dbReference type="PIRSF" id="PIRSF006160">
    <property type="entry name" value="AI2"/>
    <property type="match status" value="1"/>
</dbReference>
<dbReference type="PRINTS" id="PR01487">
    <property type="entry name" value="LUXSPROTEIN"/>
</dbReference>
<dbReference type="SUPFAM" id="SSF63411">
    <property type="entry name" value="LuxS/MPP-like metallohydrolase"/>
    <property type="match status" value="1"/>
</dbReference>
<feature type="chain" id="PRO_1000075458" description="S-ribosylhomocysteine lyase">
    <location>
        <begin position="1"/>
        <end position="169"/>
    </location>
</feature>
<feature type="binding site" evidence="1">
    <location>
        <position position="54"/>
    </location>
    <ligand>
        <name>Fe cation</name>
        <dbReference type="ChEBI" id="CHEBI:24875"/>
    </ligand>
</feature>
<feature type="binding site" evidence="1">
    <location>
        <position position="58"/>
    </location>
    <ligand>
        <name>Fe cation</name>
        <dbReference type="ChEBI" id="CHEBI:24875"/>
    </ligand>
</feature>
<feature type="binding site" evidence="1">
    <location>
        <position position="128"/>
    </location>
    <ligand>
        <name>Fe cation</name>
        <dbReference type="ChEBI" id="CHEBI:24875"/>
    </ligand>
</feature>
<name>LUXS_SHEB9</name>
<evidence type="ECO:0000255" key="1">
    <source>
        <dbReference type="HAMAP-Rule" id="MF_00091"/>
    </source>
</evidence>
<proteinExistence type="inferred from homology"/>
<reference key="1">
    <citation type="submission" date="2007-11" db="EMBL/GenBank/DDBJ databases">
        <title>Complete sequence of chromosome of Shewanella baltica OS195.</title>
        <authorList>
            <consortium name="US DOE Joint Genome Institute"/>
            <person name="Copeland A."/>
            <person name="Lucas S."/>
            <person name="Lapidus A."/>
            <person name="Barry K."/>
            <person name="Glavina del Rio T."/>
            <person name="Dalin E."/>
            <person name="Tice H."/>
            <person name="Pitluck S."/>
            <person name="Chain P."/>
            <person name="Malfatti S."/>
            <person name="Shin M."/>
            <person name="Vergez L."/>
            <person name="Schmutz J."/>
            <person name="Larimer F."/>
            <person name="Land M."/>
            <person name="Hauser L."/>
            <person name="Kyrpides N."/>
            <person name="Kim E."/>
            <person name="Brettar I."/>
            <person name="Rodrigues J."/>
            <person name="Konstantinidis K."/>
            <person name="Klappenbach J."/>
            <person name="Hofle M."/>
            <person name="Tiedje J."/>
            <person name="Richardson P."/>
        </authorList>
    </citation>
    <scope>NUCLEOTIDE SEQUENCE [LARGE SCALE GENOMIC DNA]</scope>
    <source>
        <strain>OS195</strain>
    </source>
</reference>
<keyword id="KW-0071">Autoinducer synthesis</keyword>
<keyword id="KW-0408">Iron</keyword>
<keyword id="KW-0456">Lyase</keyword>
<keyword id="KW-0479">Metal-binding</keyword>
<keyword id="KW-0673">Quorum sensing</keyword>
<organism>
    <name type="scientific">Shewanella baltica (strain OS195)</name>
    <dbReference type="NCBI Taxonomy" id="399599"/>
    <lineage>
        <taxon>Bacteria</taxon>
        <taxon>Pseudomonadati</taxon>
        <taxon>Pseudomonadota</taxon>
        <taxon>Gammaproteobacteria</taxon>
        <taxon>Alteromonadales</taxon>
        <taxon>Shewanellaceae</taxon>
        <taxon>Shewanella</taxon>
    </lineage>
</organism>
<comment type="function">
    <text evidence="1">Involved in the synthesis of autoinducer 2 (AI-2) which is secreted by bacteria and is used to communicate both the cell density and the metabolic potential of the environment. The regulation of gene expression in response to changes in cell density is called quorum sensing. Catalyzes the transformation of S-ribosylhomocysteine (RHC) to homocysteine (HC) and 4,5-dihydroxy-2,3-pentadione (DPD).</text>
</comment>
<comment type="catalytic activity">
    <reaction evidence="1">
        <text>S-(5-deoxy-D-ribos-5-yl)-L-homocysteine = (S)-4,5-dihydroxypentane-2,3-dione + L-homocysteine</text>
        <dbReference type="Rhea" id="RHEA:17753"/>
        <dbReference type="ChEBI" id="CHEBI:29484"/>
        <dbReference type="ChEBI" id="CHEBI:58195"/>
        <dbReference type="ChEBI" id="CHEBI:58199"/>
        <dbReference type="EC" id="4.4.1.21"/>
    </reaction>
</comment>
<comment type="cofactor">
    <cofactor evidence="1">
        <name>Fe cation</name>
        <dbReference type="ChEBI" id="CHEBI:24875"/>
    </cofactor>
    <text evidence="1">Binds 1 Fe cation per subunit.</text>
</comment>
<comment type="subunit">
    <text evidence="1">Homodimer.</text>
</comment>
<comment type="similarity">
    <text evidence="1">Belongs to the LuxS family.</text>
</comment>
<sequence length="169" mass="18831">MPLLDSFTVDHTRMNAPAVRVAKHMSTPKGDAITVFDLRFCAPNKDILSERGIHTLEHLFAGFMRDHLNGSNVEIIDISPMGCRTGFYMSLIGEPTERQVADAWLAAMEDVLKVVEQSEIPELNEYQCGTYEMHSLEQAQDIARNIIAAGVSVNRNDDLKLSDEILGNL</sequence>
<protein>
    <recommendedName>
        <fullName evidence="1">S-ribosylhomocysteine lyase</fullName>
        <ecNumber evidence="1">4.4.1.21</ecNumber>
    </recommendedName>
    <alternativeName>
        <fullName evidence="1">AI-2 synthesis protein</fullName>
    </alternativeName>
    <alternativeName>
        <fullName evidence="1">Autoinducer-2 production protein LuxS</fullName>
    </alternativeName>
</protein>